<evidence type="ECO:0000250" key="1">
    <source>
        <dbReference type="UniProtKB" id="P02144"/>
    </source>
</evidence>
<evidence type="ECO:0000250" key="2">
    <source>
        <dbReference type="UniProtKB" id="P02185"/>
    </source>
</evidence>
<evidence type="ECO:0000250" key="3">
    <source>
        <dbReference type="UniProtKB" id="P02189"/>
    </source>
</evidence>
<evidence type="ECO:0000250" key="4">
    <source>
        <dbReference type="UniProtKB" id="P68082"/>
    </source>
</evidence>
<evidence type="ECO:0000255" key="5">
    <source>
        <dbReference type="PROSITE-ProRule" id="PRU00238"/>
    </source>
</evidence>
<evidence type="ECO:0000269" key="6">
    <source>
    </source>
</evidence>
<evidence type="ECO:0000305" key="7"/>
<dbReference type="EC" id="1.7.-.-" evidence="1"/>
<dbReference type="EC" id="1.11.1.-" evidence="1"/>
<dbReference type="PIR" id="A60792">
    <property type="entry name" value="MYCH"/>
</dbReference>
<dbReference type="RefSeq" id="NP_001161224.1">
    <property type="nucleotide sequence ID" value="NM_001167752.3"/>
</dbReference>
<dbReference type="SMR" id="P02197"/>
<dbReference type="FunCoup" id="P02197">
    <property type="interactions" value="1251"/>
</dbReference>
<dbReference type="STRING" id="9031.ENSGALP00000020457"/>
<dbReference type="CarbonylDB" id="P02197"/>
<dbReference type="PaxDb" id="9031-ENSGALP00000020457"/>
<dbReference type="Ensembl" id="ENSGALT00010036382.1">
    <property type="protein sequence ID" value="ENSGALP00010021166.1"/>
    <property type="gene ID" value="ENSGALG00010015107.1"/>
</dbReference>
<dbReference type="GeneID" id="418056"/>
<dbReference type="KEGG" id="gga:418056"/>
<dbReference type="CTD" id="4151"/>
<dbReference type="VEuPathDB" id="HostDB:geneid_418056"/>
<dbReference type="eggNOG" id="KOG3378">
    <property type="taxonomic scope" value="Eukaryota"/>
</dbReference>
<dbReference type="GeneTree" id="ENSGT00940000160809"/>
<dbReference type="HOGENOM" id="CLU_003827_18_0_1"/>
<dbReference type="InParanoid" id="P02197"/>
<dbReference type="OMA" id="VIIRMFQ"/>
<dbReference type="OrthoDB" id="6344802at2759"/>
<dbReference type="PhylomeDB" id="P02197"/>
<dbReference type="TreeFam" id="TF332967"/>
<dbReference type="Reactome" id="R-GGA-8981607">
    <property type="pathway name" value="Intracellular oxygen transport"/>
</dbReference>
<dbReference type="PRO" id="PR:P02197"/>
<dbReference type="Proteomes" id="UP000000539">
    <property type="component" value="Chromosome 1"/>
</dbReference>
<dbReference type="Bgee" id="ENSGALG00000012541">
    <property type="expression patterns" value="Expressed in heart and 5 other cell types or tissues"/>
</dbReference>
<dbReference type="GO" id="GO:0016528">
    <property type="term" value="C:sarcoplasm"/>
    <property type="evidence" value="ECO:0000250"/>
    <property type="project" value="UniProtKB"/>
</dbReference>
<dbReference type="GO" id="GO:0020037">
    <property type="term" value="F:heme binding"/>
    <property type="evidence" value="ECO:0007669"/>
    <property type="project" value="InterPro"/>
</dbReference>
<dbReference type="GO" id="GO:0046872">
    <property type="term" value="F:metal ion binding"/>
    <property type="evidence" value="ECO:0007669"/>
    <property type="project" value="UniProtKB-KW"/>
</dbReference>
<dbReference type="GO" id="GO:0098809">
    <property type="term" value="F:nitrite reductase activity"/>
    <property type="evidence" value="ECO:0000250"/>
    <property type="project" value="UniProtKB"/>
</dbReference>
<dbReference type="GO" id="GO:0019825">
    <property type="term" value="F:oxygen binding"/>
    <property type="evidence" value="ECO:0000318"/>
    <property type="project" value="GO_Central"/>
</dbReference>
<dbReference type="GO" id="GO:0005344">
    <property type="term" value="F:oxygen carrier activity"/>
    <property type="evidence" value="ECO:0000250"/>
    <property type="project" value="UniProtKB"/>
</dbReference>
<dbReference type="GO" id="GO:0004601">
    <property type="term" value="F:peroxidase activity"/>
    <property type="evidence" value="ECO:0000250"/>
    <property type="project" value="UniProtKB"/>
</dbReference>
<dbReference type="GO" id="GO:0043353">
    <property type="term" value="P:enucleate erythrocyte differentiation"/>
    <property type="evidence" value="ECO:0007669"/>
    <property type="project" value="Ensembl"/>
</dbReference>
<dbReference type="GO" id="GO:0007507">
    <property type="term" value="P:heart development"/>
    <property type="evidence" value="ECO:0007669"/>
    <property type="project" value="Ensembl"/>
</dbReference>
<dbReference type="GO" id="GO:0015671">
    <property type="term" value="P:oxygen transport"/>
    <property type="evidence" value="ECO:0000318"/>
    <property type="project" value="GO_Central"/>
</dbReference>
<dbReference type="GO" id="GO:0019430">
    <property type="term" value="P:removal of superoxide radicals"/>
    <property type="evidence" value="ECO:0000250"/>
    <property type="project" value="UniProtKB"/>
</dbReference>
<dbReference type="GO" id="GO:0001666">
    <property type="term" value="P:response to hypoxia"/>
    <property type="evidence" value="ECO:0007669"/>
    <property type="project" value="Ensembl"/>
</dbReference>
<dbReference type="Gene3D" id="6.10.140.2100">
    <property type="match status" value="1"/>
</dbReference>
<dbReference type="Gene3D" id="6.10.140.2110">
    <property type="match status" value="1"/>
</dbReference>
<dbReference type="InterPro" id="IPR000971">
    <property type="entry name" value="Globin"/>
</dbReference>
<dbReference type="InterPro" id="IPR009050">
    <property type="entry name" value="Globin-like_sf"/>
</dbReference>
<dbReference type="InterPro" id="IPR002335">
    <property type="entry name" value="Myoglobin"/>
</dbReference>
<dbReference type="PANTHER" id="PTHR47132">
    <property type="entry name" value="MYOGLOBIN"/>
    <property type="match status" value="1"/>
</dbReference>
<dbReference type="PANTHER" id="PTHR47132:SF1">
    <property type="entry name" value="MYOGLOBIN"/>
    <property type="match status" value="1"/>
</dbReference>
<dbReference type="Pfam" id="PF00042">
    <property type="entry name" value="Globin"/>
    <property type="match status" value="1"/>
</dbReference>
<dbReference type="PRINTS" id="PR00613">
    <property type="entry name" value="MYOGLOBIN"/>
</dbReference>
<dbReference type="SUPFAM" id="SSF46458">
    <property type="entry name" value="Globin-like"/>
    <property type="match status" value="1"/>
</dbReference>
<dbReference type="PROSITE" id="PS01033">
    <property type="entry name" value="GLOBIN"/>
    <property type="match status" value="1"/>
</dbReference>
<name>MYG_CHICK</name>
<sequence>MGLSDQEWQQVLTIWGKVEADIAGHGHEVLMRLFHDHPETLDRFDKFKGLKTPDQMKGSEDLKKHGATVLTQLGKILKQKGNHESELKPLAQTHATKHKIPVKYLEFISEVIIKVIAEKHAADFGADSQAAMKKALELFRNDMASKYKEFGFQG</sequence>
<feature type="initiator methionine" description="Removed" evidence="6">
    <location>
        <position position="1"/>
    </location>
</feature>
<feature type="chain" id="PRO_0000053356" description="Myoglobin">
    <location>
        <begin position="2"/>
        <end position="154"/>
    </location>
</feature>
<feature type="domain" description="Globin" evidence="5">
    <location>
        <begin position="2"/>
        <end position="148"/>
    </location>
</feature>
<feature type="binding site" evidence="4">
    <location>
        <position position="65"/>
    </location>
    <ligand>
        <name>nitrite</name>
        <dbReference type="ChEBI" id="CHEBI:16301"/>
    </ligand>
</feature>
<feature type="binding site" evidence="3 5">
    <location>
        <position position="65"/>
    </location>
    <ligand>
        <name>O2</name>
        <dbReference type="ChEBI" id="CHEBI:15379"/>
    </ligand>
</feature>
<feature type="binding site" description="proximal binding residue" evidence="1">
    <location>
        <position position="94"/>
    </location>
    <ligand>
        <name>heme b</name>
        <dbReference type="ChEBI" id="CHEBI:60344"/>
    </ligand>
    <ligandPart>
        <name>Fe</name>
        <dbReference type="ChEBI" id="CHEBI:18248"/>
    </ligandPart>
</feature>
<feature type="sequence conflict" description="In Ref. 3." evidence="7" ref="3">
    <original>DQ</original>
    <variation>NE</variation>
    <location>
        <begin position="54"/>
        <end position="55"/>
    </location>
</feature>
<feature type="sequence conflict" description="In Ref. 3." evidence="7" ref="3">
    <original>N</original>
    <variation>Q</variation>
    <location>
        <position position="82"/>
    </location>
</feature>
<feature type="sequence conflict" description="In Ref. 3." evidence="7" ref="3">
    <original>E</original>
    <variation>D</variation>
    <location>
        <position position="86"/>
    </location>
</feature>
<gene>
    <name type="primary">MB</name>
</gene>
<reference key="1">
    <citation type="journal article" date="1987" name="Comp. Biochem. Physiol.">
        <title>Stability properties of oxymyoglobin from chicken gizzard smooth muscle.</title>
        <authorList>
            <person name="Matsuoka A."/>
            <person name="Iwaasa H."/>
            <person name="Takiguchi K."/>
            <person name="Arakawa N."/>
            <person name="Li L."/>
            <person name="Takagi T."/>
            <person name="Shikama K."/>
        </authorList>
    </citation>
    <scope>PROTEIN SEQUENCE OF 2-154</scope>
</reference>
<reference key="2">
    <citation type="journal article" date="1975" name="Biochim. Biophys. Acta">
        <title>The primary sequence of chicken myoglobin (Gallus gallus).</title>
        <authorList>
            <person name="Deconinck M."/>
            <person name="Peiffer S."/>
            <person name="Depreter J."/>
            <person name="Paul C."/>
            <person name="Schnek A.G."/>
            <person name="Leonis J."/>
        </authorList>
    </citation>
    <scope>PRELIMINARY PROTEIN SEQUENCE OF 2-154</scope>
</reference>
<reference key="3">
    <citation type="journal article" date="1983" name="Biochim. Biophys. Acta">
        <title>Chicken cardiac myoglobin revisited.</title>
        <authorList>
            <person name="Prass W.A."/>
            <person name="Berkley D.S."/>
            <person name="Romero-Herrera A.E."/>
        </authorList>
    </citation>
    <scope>SEQUENCE REVISION</scope>
    <source>
        <tissue>Heart muscle</tissue>
    </source>
</reference>
<protein>
    <recommendedName>
        <fullName>Myoglobin</fullName>
    </recommendedName>
    <alternativeName>
        <fullName evidence="1">Nitrite reductase MB</fullName>
        <ecNumber evidence="1">1.7.-.-</ecNumber>
    </alternativeName>
    <alternativeName>
        <fullName evidence="1">Pseudoperoxidase MB</fullName>
        <ecNumber evidence="1">1.11.1.-</ecNumber>
    </alternativeName>
</protein>
<accession>P02197</accession>
<accession>P02198</accession>
<proteinExistence type="evidence at protein level"/>
<comment type="function">
    <text evidence="1">Monomeric heme protein which primary function is to store oxygen and facilitate its diffusion within muscle tissues. Reversibly binds oxygen through a pentacoordinated heme iron and enables its timely and efficient release as needed during periods of heightened demand. Depending on the oxidative conditions of tissues and cells, and in addition to its ability to bind oxygen, it also has a nitrite reductase activity whereby it regulates the production of bioactive nitric oxide. Under stress conditions, like hypoxia and anoxia, it also protects cells against reactive oxygen species thanks to its pseudoperoxidase activity.</text>
</comment>
<comment type="catalytic activity">
    <reaction evidence="1">
        <text>Fe(III)-heme b-[protein] + nitric oxide + H2O = Fe(II)-heme b-[protein] + nitrite + 2 H(+)</text>
        <dbReference type="Rhea" id="RHEA:77711"/>
        <dbReference type="Rhea" id="RHEA-COMP:18975"/>
        <dbReference type="Rhea" id="RHEA-COMP:18976"/>
        <dbReference type="ChEBI" id="CHEBI:15377"/>
        <dbReference type="ChEBI" id="CHEBI:15378"/>
        <dbReference type="ChEBI" id="CHEBI:16301"/>
        <dbReference type="ChEBI" id="CHEBI:16480"/>
        <dbReference type="ChEBI" id="CHEBI:55376"/>
        <dbReference type="ChEBI" id="CHEBI:60344"/>
    </reaction>
    <physiologicalReaction direction="right-to-left" evidence="1">
        <dbReference type="Rhea" id="RHEA:77713"/>
    </physiologicalReaction>
</comment>
<comment type="catalytic activity">
    <reaction evidence="1">
        <text>H2O2 + AH2 = A + 2 H2O</text>
        <dbReference type="Rhea" id="RHEA:30275"/>
        <dbReference type="ChEBI" id="CHEBI:13193"/>
        <dbReference type="ChEBI" id="CHEBI:15377"/>
        <dbReference type="ChEBI" id="CHEBI:16240"/>
        <dbReference type="ChEBI" id="CHEBI:17499"/>
    </reaction>
</comment>
<comment type="subunit">
    <text evidence="2">Monomeric.</text>
</comment>
<comment type="subcellular location">
    <subcellularLocation>
        <location evidence="1">Cytoplasm</location>
        <location evidence="1">Sarcoplasm</location>
    </subcellularLocation>
</comment>
<comment type="similarity">
    <text evidence="5">Belongs to the globin family.</text>
</comment>
<organism>
    <name type="scientific">Gallus gallus</name>
    <name type="common">Chicken</name>
    <dbReference type="NCBI Taxonomy" id="9031"/>
    <lineage>
        <taxon>Eukaryota</taxon>
        <taxon>Metazoa</taxon>
        <taxon>Chordata</taxon>
        <taxon>Craniata</taxon>
        <taxon>Vertebrata</taxon>
        <taxon>Euteleostomi</taxon>
        <taxon>Archelosauria</taxon>
        <taxon>Archosauria</taxon>
        <taxon>Dinosauria</taxon>
        <taxon>Saurischia</taxon>
        <taxon>Theropoda</taxon>
        <taxon>Coelurosauria</taxon>
        <taxon>Aves</taxon>
        <taxon>Neognathae</taxon>
        <taxon>Galloanserae</taxon>
        <taxon>Galliformes</taxon>
        <taxon>Phasianidae</taxon>
        <taxon>Phasianinae</taxon>
        <taxon>Gallus</taxon>
    </lineage>
</organism>
<keyword id="KW-0963">Cytoplasm</keyword>
<keyword id="KW-0903">Direct protein sequencing</keyword>
<keyword id="KW-0349">Heme</keyword>
<keyword id="KW-0408">Iron</keyword>
<keyword id="KW-0479">Metal-binding</keyword>
<keyword id="KW-0514">Muscle protein</keyword>
<keyword id="KW-0560">Oxidoreductase</keyword>
<keyword id="KW-0561">Oxygen transport</keyword>
<keyword id="KW-1185">Reference proteome</keyword>
<keyword id="KW-0813">Transport</keyword>